<proteinExistence type="inferred from homology"/>
<accession>B2TY76</accession>
<evidence type="ECO:0000255" key="1">
    <source>
        <dbReference type="HAMAP-Rule" id="MF_00503"/>
    </source>
</evidence>
<evidence type="ECO:0000305" key="2"/>
<dbReference type="EMBL" id="CP001063">
    <property type="protein sequence ID" value="ACD08488.1"/>
    <property type="molecule type" value="Genomic_DNA"/>
</dbReference>
<dbReference type="RefSeq" id="WP_001196062.1">
    <property type="nucleotide sequence ID" value="NC_010658.1"/>
</dbReference>
<dbReference type="SMR" id="B2TY76"/>
<dbReference type="STRING" id="344609.SbBS512_E4736"/>
<dbReference type="GeneID" id="93777620"/>
<dbReference type="KEGG" id="sbc:SbBS512_E4736"/>
<dbReference type="HOGENOM" id="CLU_078938_4_1_6"/>
<dbReference type="Proteomes" id="UP000001030">
    <property type="component" value="Chromosome"/>
</dbReference>
<dbReference type="GO" id="GO:1990904">
    <property type="term" value="C:ribonucleoprotein complex"/>
    <property type="evidence" value="ECO:0007669"/>
    <property type="project" value="UniProtKB-KW"/>
</dbReference>
<dbReference type="GO" id="GO:0005840">
    <property type="term" value="C:ribosome"/>
    <property type="evidence" value="ECO:0007669"/>
    <property type="project" value="UniProtKB-KW"/>
</dbReference>
<dbReference type="GO" id="GO:0019843">
    <property type="term" value="F:rRNA binding"/>
    <property type="evidence" value="ECO:0007669"/>
    <property type="project" value="UniProtKB-UniRule"/>
</dbReference>
<dbReference type="GO" id="GO:0003735">
    <property type="term" value="F:structural constituent of ribosome"/>
    <property type="evidence" value="ECO:0007669"/>
    <property type="project" value="InterPro"/>
</dbReference>
<dbReference type="GO" id="GO:0006412">
    <property type="term" value="P:translation"/>
    <property type="evidence" value="ECO:0007669"/>
    <property type="project" value="UniProtKB-UniRule"/>
</dbReference>
<dbReference type="FunFam" id="3.10.430.100:FF:000001">
    <property type="entry name" value="50S ribosomal protein L9"/>
    <property type="match status" value="1"/>
</dbReference>
<dbReference type="FunFam" id="3.40.5.10:FF:000001">
    <property type="entry name" value="50S ribosomal protein L9"/>
    <property type="match status" value="1"/>
</dbReference>
<dbReference type="Gene3D" id="3.10.430.100">
    <property type="entry name" value="Ribosomal protein L9, C-terminal domain"/>
    <property type="match status" value="1"/>
</dbReference>
<dbReference type="Gene3D" id="3.40.5.10">
    <property type="entry name" value="Ribosomal protein L9, N-terminal domain"/>
    <property type="match status" value="1"/>
</dbReference>
<dbReference type="HAMAP" id="MF_00503">
    <property type="entry name" value="Ribosomal_bL9"/>
    <property type="match status" value="1"/>
</dbReference>
<dbReference type="InterPro" id="IPR000244">
    <property type="entry name" value="Ribosomal_bL9"/>
</dbReference>
<dbReference type="InterPro" id="IPR009027">
    <property type="entry name" value="Ribosomal_bL9/RNase_H1_N"/>
</dbReference>
<dbReference type="InterPro" id="IPR020594">
    <property type="entry name" value="Ribosomal_bL9_bac/chp"/>
</dbReference>
<dbReference type="InterPro" id="IPR020069">
    <property type="entry name" value="Ribosomal_bL9_C"/>
</dbReference>
<dbReference type="InterPro" id="IPR036791">
    <property type="entry name" value="Ribosomal_bL9_C_sf"/>
</dbReference>
<dbReference type="InterPro" id="IPR020070">
    <property type="entry name" value="Ribosomal_bL9_N"/>
</dbReference>
<dbReference type="InterPro" id="IPR036935">
    <property type="entry name" value="Ribosomal_bL9_N_sf"/>
</dbReference>
<dbReference type="NCBIfam" id="TIGR00158">
    <property type="entry name" value="L9"/>
    <property type="match status" value="1"/>
</dbReference>
<dbReference type="PANTHER" id="PTHR21368">
    <property type="entry name" value="50S RIBOSOMAL PROTEIN L9"/>
    <property type="match status" value="1"/>
</dbReference>
<dbReference type="Pfam" id="PF03948">
    <property type="entry name" value="Ribosomal_L9_C"/>
    <property type="match status" value="1"/>
</dbReference>
<dbReference type="Pfam" id="PF01281">
    <property type="entry name" value="Ribosomal_L9_N"/>
    <property type="match status" value="1"/>
</dbReference>
<dbReference type="SUPFAM" id="SSF55658">
    <property type="entry name" value="L9 N-domain-like"/>
    <property type="match status" value="1"/>
</dbReference>
<dbReference type="SUPFAM" id="SSF55653">
    <property type="entry name" value="Ribosomal protein L9 C-domain"/>
    <property type="match status" value="1"/>
</dbReference>
<dbReference type="PROSITE" id="PS00651">
    <property type="entry name" value="RIBOSOMAL_L9"/>
    <property type="match status" value="1"/>
</dbReference>
<sequence>MQVILLDKVANLGSLGDQVNVKAGYARNFLVPQGKAVPATKKNIEFFEARRAELEAKLAEVLAAANARAEKINALETVTIASKAGDEGKLFGSIGTRDIADAVTAAGVEVAKSEVRLPNGVLRTTGEHEVSFQVHSEVFAKVIVNVVAE</sequence>
<name>RL9_SHIB3</name>
<organism>
    <name type="scientific">Shigella boydii serotype 18 (strain CDC 3083-94 / BS512)</name>
    <dbReference type="NCBI Taxonomy" id="344609"/>
    <lineage>
        <taxon>Bacteria</taxon>
        <taxon>Pseudomonadati</taxon>
        <taxon>Pseudomonadota</taxon>
        <taxon>Gammaproteobacteria</taxon>
        <taxon>Enterobacterales</taxon>
        <taxon>Enterobacteriaceae</taxon>
        <taxon>Shigella</taxon>
    </lineage>
</organism>
<keyword id="KW-0007">Acetylation</keyword>
<keyword id="KW-1185">Reference proteome</keyword>
<keyword id="KW-0687">Ribonucleoprotein</keyword>
<keyword id="KW-0689">Ribosomal protein</keyword>
<keyword id="KW-0694">RNA-binding</keyword>
<keyword id="KW-0699">rRNA-binding</keyword>
<feature type="chain" id="PRO_1000126973" description="Large ribosomal subunit protein bL9">
    <location>
        <begin position="1"/>
        <end position="149"/>
    </location>
</feature>
<feature type="modified residue" description="N6-acetyllysine" evidence="1">
    <location>
        <position position="89"/>
    </location>
</feature>
<gene>
    <name evidence="1" type="primary">rplI</name>
    <name type="ordered locus">SbBS512_E4736</name>
</gene>
<protein>
    <recommendedName>
        <fullName evidence="1">Large ribosomal subunit protein bL9</fullName>
    </recommendedName>
    <alternativeName>
        <fullName evidence="2">50S ribosomal protein L9</fullName>
    </alternativeName>
</protein>
<comment type="function">
    <text evidence="1">Binds to the 23S rRNA.</text>
</comment>
<comment type="similarity">
    <text evidence="1">Belongs to the bacterial ribosomal protein bL9 family.</text>
</comment>
<reference key="1">
    <citation type="submission" date="2008-05" db="EMBL/GenBank/DDBJ databases">
        <title>Complete sequence of Shigella boydii serotype 18 strain BS512.</title>
        <authorList>
            <person name="Rasko D.A."/>
            <person name="Rosovitz M."/>
            <person name="Maurelli A.T."/>
            <person name="Myers G."/>
            <person name="Seshadri R."/>
            <person name="Cer R."/>
            <person name="Jiang L."/>
            <person name="Ravel J."/>
            <person name="Sebastian Y."/>
        </authorList>
    </citation>
    <scope>NUCLEOTIDE SEQUENCE [LARGE SCALE GENOMIC DNA]</scope>
    <source>
        <strain>CDC 3083-94 / BS512</strain>
    </source>
</reference>